<reference key="1">
    <citation type="journal article" date="2008" name="Genomics">
        <title>Characterization of ST-4821 complex, a unique Neisseria meningitidis clone.</title>
        <authorList>
            <person name="Peng J."/>
            <person name="Yang L."/>
            <person name="Yang F."/>
            <person name="Yang J."/>
            <person name="Yan Y."/>
            <person name="Nie H."/>
            <person name="Zhang X."/>
            <person name="Xiong Z."/>
            <person name="Jiang Y."/>
            <person name="Cheng F."/>
            <person name="Xu X."/>
            <person name="Chen S."/>
            <person name="Sun L."/>
            <person name="Li W."/>
            <person name="Shen Y."/>
            <person name="Shao Z."/>
            <person name="Liang X."/>
            <person name="Xu J."/>
            <person name="Jin Q."/>
        </authorList>
    </citation>
    <scope>NUCLEOTIDE SEQUENCE [LARGE SCALE GENOMIC DNA]</scope>
    <source>
        <strain>053442</strain>
    </source>
</reference>
<organism>
    <name type="scientific">Neisseria meningitidis serogroup C (strain 053442)</name>
    <dbReference type="NCBI Taxonomy" id="374833"/>
    <lineage>
        <taxon>Bacteria</taxon>
        <taxon>Pseudomonadati</taxon>
        <taxon>Pseudomonadota</taxon>
        <taxon>Betaproteobacteria</taxon>
        <taxon>Neisseriales</taxon>
        <taxon>Neisseriaceae</taxon>
        <taxon>Neisseria</taxon>
    </lineage>
</organism>
<gene>
    <name evidence="1" type="primary">cca</name>
    <name type="ordered locus">NMCC_1122</name>
</gene>
<sequence length="417" mass="46825">MQTYLVGGAVRDYLLGLPVKDRDWVVVGADAQTMLAQGFQPVGKDFPVFLHPETHEEYALARTERKTAKGYAGFSFHADKDVTLEQDLMRRDLTINAMAQDAGGKIIDPFGGQRDLAAGILRHVSPAFAEDPVRILRTARFAARYRFEIAEETIKLMRQMVENGEADALVAERVWQELAKGLMEKNPRKMIEVLRECGALKVLLPEVNALFGVPQRADYHPEIDSGIHTLMTLQRAADMGLSLPERYAALLHDLGKAKTPPDILPRHHGHDLAGVEPVREVNQRLRAPKHCAELAELVCRWHIIFHQVGQLKSQTILNVLKKTDAFRRPERFQTALNVCIADTQGRLNREHTPYPQRAHWLALLEAANQADSGKIAAECRAQGKAHLIAEQIDRMRLAQIAPLQKAFQAAQDKTEKH</sequence>
<protein>
    <recommendedName>
        <fullName evidence="1">Multifunctional CCA protein</fullName>
    </recommendedName>
    <domain>
        <recommendedName>
            <fullName evidence="1">CCA-adding enzyme</fullName>
            <ecNumber evidence="1">2.7.7.72</ecNumber>
        </recommendedName>
        <alternativeName>
            <fullName evidence="1">CCA tRNA nucleotidyltransferase</fullName>
        </alternativeName>
        <alternativeName>
            <fullName evidence="1">tRNA CCA-pyrophosphorylase</fullName>
        </alternativeName>
        <alternativeName>
            <fullName evidence="1">tRNA adenylyl-/cytidylyl-transferase</fullName>
        </alternativeName>
        <alternativeName>
            <fullName evidence="1">tRNA nucleotidyltransferase</fullName>
        </alternativeName>
        <alternativeName>
            <fullName evidence="1">tRNA-NT</fullName>
        </alternativeName>
    </domain>
    <domain>
        <recommendedName>
            <fullName evidence="1">2'-nucleotidase</fullName>
            <ecNumber evidence="1">3.1.3.-</ecNumber>
        </recommendedName>
    </domain>
    <domain>
        <recommendedName>
            <fullName evidence="1">2',3'-cyclic phosphodiesterase</fullName>
            <ecNumber evidence="1">3.1.4.-</ecNumber>
        </recommendedName>
    </domain>
    <domain>
        <recommendedName>
            <fullName evidence="1">Phosphatase</fullName>
            <ecNumber evidence="1">3.1.3.-</ecNumber>
        </recommendedName>
    </domain>
</protein>
<accession>A9LZC1</accession>
<keyword id="KW-0067">ATP-binding</keyword>
<keyword id="KW-0378">Hydrolase</keyword>
<keyword id="KW-0460">Magnesium</keyword>
<keyword id="KW-0479">Metal-binding</keyword>
<keyword id="KW-0511">Multifunctional enzyme</keyword>
<keyword id="KW-0533">Nickel</keyword>
<keyword id="KW-0547">Nucleotide-binding</keyword>
<keyword id="KW-0548">Nucleotidyltransferase</keyword>
<keyword id="KW-0692">RNA repair</keyword>
<keyword id="KW-0694">RNA-binding</keyword>
<keyword id="KW-0808">Transferase</keyword>
<keyword id="KW-0819">tRNA processing</keyword>
<name>CCA_NEIM0</name>
<proteinExistence type="inferred from homology"/>
<comment type="function">
    <text evidence="1">Catalyzes the addition and repair of the essential 3'-terminal CCA sequence in tRNAs without using a nucleic acid template. Adds these three nucleotides in the order of C, C, and A to the tRNA nucleotide-73, using CTP and ATP as substrates and producing inorganic pyrophosphate. tRNA 3'-terminal CCA addition is required both for tRNA processing and repair. Also involved in tRNA surveillance by mediating tandem CCA addition to generate a CCACCA at the 3' terminus of unstable tRNAs. While stable tRNAs receive only 3'-terminal CCA, unstable tRNAs are marked with CCACCA and rapidly degraded.</text>
</comment>
<comment type="catalytic activity">
    <reaction evidence="1">
        <text>a tRNA precursor + 2 CTP + ATP = a tRNA with a 3' CCA end + 3 diphosphate</text>
        <dbReference type="Rhea" id="RHEA:14433"/>
        <dbReference type="Rhea" id="RHEA-COMP:10465"/>
        <dbReference type="Rhea" id="RHEA-COMP:10468"/>
        <dbReference type="ChEBI" id="CHEBI:30616"/>
        <dbReference type="ChEBI" id="CHEBI:33019"/>
        <dbReference type="ChEBI" id="CHEBI:37563"/>
        <dbReference type="ChEBI" id="CHEBI:74896"/>
        <dbReference type="ChEBI" id="CHEBI:83071"/>
        <dbReference type="EC" id="2.7.7.72"/>
    </reaction>
</comment>
<comment type="catalytic activity">
    <reaction evidence="1">
        <text>a tRNA with a 3' CCA end + 2 CTP + ATP = a tRNA with a 3' CCACCA end + 3 diphosphate</text>
        <dbReference type="Rhea" id="RHEA:76235"/>
        <dbReference type="Rhea" id="RHEA-COMP:10468"/>
        <dbReference type="Rhea" id="RHEA-COMP:18655"/>
        <dbReference type="ChEBI" id="CHEBI:30616"/>
        <dbReference type="ChEBI" id="CHEBI:33019"/>
        <dbReference type="ChEBI" id="CHEBI:37563"/>
        <dbReference type="ChEBI" id="CHEBI:83071"/>
        <dbReference type="ChEBI" id="CHEBI:195187"/>
    </reaction>
    <physiologicalReaction direction="left-to-right" evidence="1">
        <dbReference type="Rhea" id="RHEA:76236"/>
    </physiologicalReaction>
</comment>
<comment type="cofactor">
    <cofactor evidence="1">
        <name>Mg(2+)</name>
        <dbReference type="ChEBI" id="CHEBI:18420"/>
    </cofactor>
    <text evidence="1">Magnesium is required for nucleotidyltransferase activity.</text>
</comment>
<comment type="cofactor">
    <cofactor evidence="1">
        <name>Ni(2+)</name>
        <dbReference type="ChEBI" id="CHEBI:49786"/>
    </cofactor>
    <text evidence="1">Nickel for phosphatase activity.</text>
</comment>
<comment type="subunit">
    <text evidence="1">Monomer. Can also form homodimers and oligomers.</text>
</comment>
<comment type="domain">
    <text evidence="1">Comprises two domains: an N-terminal domain containing the nucleotidyltransferase activity and a C-terminal HD domain associated with both phosphodiesterase and phosphatase activities.</text>
</comment>
<comment type="miscellaneous">
    <text evidence="1">A single active site specifically recognizes both ATP and CTP and is responsible for their addition.</text>
</comment>
<comment type="similarity">
    <text evidence="1">Belongs to the tRNA nucleotidyltransferase/poly(A) polymerase family. Bacterial CCA-adding enzyme type 1 subfamily.</text>
</comment>
<evidence type="ECO:0000255" key="1">
    <source>
        <dbReference type="HAMAP-Rule" id="MF_01261"/>
    </source>
</evidence>
<dbReference type="EC" id="2.7.7.72" evidence="1"/>
<dbReference type="EC" id="3.1.3.-" evidence="1"/>
<dbReference type="EC" id="3.1.4.-" evidence="1"/>
<dbReference type="EMBL" id="CP000381">
    <property type="protein sequence ID" value="ABX73297.1"/>
    <property type="molecule type" value="Genomic_DNA"/>
</dbReference>
<dbReference type="RefSeq" id="WP_012221678.1">
    <property type="nucleotide sequence ID" value="NC_010120.1"/>
</dbReference>
<dbReference type="SMR" id="A9LZC1"/>
<dbReference type="KEGG" id="nmn:NMCC_1122"/>
<dbReference type="HOGENOM" id="CLU_015961_1_1_4"/>
<dbReference type="Proteomes" id="UP000001177">
    <property type="component" value="Chromosome"/>
</dbReference>
<dbReference type="GO" id="GO:0005524">
    <property type="term" value="F:ATP binding"/>
    <property type="evidence" value="ECO:0007669"/>
    <property type="project" value="UniProtKB-UniRule"/>
</dbReference>
<dbReference type="GO" id="GO:0004810">
    <property type="term" value="F:CCA tRNA nucleotidyltransferase activity"/>
    <property type="evidence" value="ECO:0007669"/>
    <property type="project" value="UniProtKB-UniRule"/>
</dbReference>
<dbReference type="GO" id="GO:0004112">
    <property type="term" value="F:cyclic-nucleotide phosphodiesterase activity"/>
    <property type="evidence" value="ECO:0007669"/>
    <property type="project" value="UniProtKB-UniRule"/>
</dbReference>
<dbReference type="GO" id="GO:0000287">
    <property type="term" value="F:magnesium ion binding"/>
    <property type="evidence" value="ECO:0007669"/>
    <property type="project" value="UniProtKB-UniRule"/>
</dbReference>
<dbReference type="GO" id="GO:0016791">
    <property type="term" value="F:phosphatase activity"/>
    <property type="evidence" value="ECO:0007669"/>
    <property type="project" value="UniProtKB-UniRule"/>
</dbReference>
<dbReference type="GO" id="GO:0000049">
    <property type="term" value="F:tRNA binding"/>
    <property type="evidence" value="ECO:0007669"/>
    <property type="project" value="UniProtKB-UniRule"/>
</dbReference>
<dbReference type="GO" id="GO:0042245">
    <property type="term" value="P:RNA repair"/>
    <property type="evidence" value="ECO:0007669"/>
    <property type="project" value="UniProtKB-KW"/>
</dbReference>
<dbReference type="GO" id="GO:0001680">
    <property type="term" value="P:tRNA 3'-terminal CCA addition"/>
    <property type="evidence" value="ECO:0007669"/>
    <property type="project" value="UniProtKB-UniRule"/>
</dbReference>
<dbReference type="CDD" id="cd00077">
    <property type="entry name" value="HDc"/>
    <property type="match status" value="1"/>
</dbReference>
<dbReference type="CDD" id="cd05398">
    <property type="entry name" value="NT_ClassII-CCAase"/>
    <property type="match status" value="1"/>
</dbReference>
<dbReference type="Gene3D" id="3.30.460.10">
    <property type="entry name" value="Beta Polymerase, domain 2"/>
    <property type="match status" value="1"/>
</dbReference>
<dbReference type="Gene3D" id="1.10.3090.10">
    <property type="entry name" value="cca-adding enzyme, domain 2"/>
    <property type="match status" value="1"/>
</dbReference>
<dbReference type="HAMAP" id="MF_01261">
    <property type="entry name" value="CCA_bact_type1"/>
    <property type="match status" value="1"/>
</dbReference>
<dbReference type="HAMAP" id="MF_01262">
    <property type="entry name" value="CCA_bact_type2"/>
    <property type="match status" value="1"/>
</dbReference>
<dbReference type="InterPro" id="IPR012006">
    <property type="entry name" value="CCA_bact"/>
</dbReference>
<dbReference type="InterPro" id="IPR003607">
    <property type="entry name" value="HD/PDEase_dom"/>
</dbReference>
<dbReference type="InterPro" id="IPR006674">
    <property type="entry name" value="HD_domain"/>
</dbReference>
<dbReference type="InterPro" id="IPR043519">
    <property type="entry name" value="NT_sf"/>
</dbReference>
<dbReference type="InterPro" id="IPR002646">
    <property type="entry name" value="PolA_pol_head_dom"/>
</dbReference>
<dbReference type="InterPro" id="IPR032828">
    <property type="entry name" value="PolyA_RNA-bd"/>
</dbReference>
<dbReference type="InterPro" id="IPR050124">
    <property type="entry name" value="tRNA_CCA-adding_enzyme"/>
</dbReference>
<dbReference type="NCBIfam" id="NF008137">
    <property type="entry name" value="PRK10885.1"/>
    <property type="match status" value="1"/>
</dbReference>
<dbReference type="PANTHER" id="PTHR47545">
    <property type="entry name" value="MULTIFUNCTIONAL CCA PROTEIN"/>
    <property type="match status" value="1"/>
</dbReference>
<dbReference type="PANTHER" id="PTHR47545:SF1">
    <property type="entry name" value="MULTIFUNCTIONAL CCA PROTEIN"/>
    <property type="match status" value="1"/>
</dbReference>
<dbReference type="Pfam" id="PF01966">
    <property type="entry name" value="HD"/>
    <property type="match status" value="1"/>
</dbReference>
<dbReference type="Pfam" id="PF01743">
    <property type="entry name" value="PolyA_pol"/>
    <property type="match status" value="1"/>
</dbReference>
<dbReference type="Pfam" id="PF12627">
    <property type="entry name" value="PolyA_pol_RNAbd"/>
    <property type="match status" value="1"/>
</dbReference>
<dbReference type="PIRSF" id="PIRSF000813">
    <property type="entry name" value="CCA_bact"/>
    <property type="match status" value="1"/>
</dbReference>
<dbReference type="SUPFAM" id="SSF81301">
    <property type="entry name" value="Nucleotidyltransferase"/>
    <property type="match status" value="1"/>
</dbReference>
<dbReference type="SUPFAM" id="SSF81891">
    <property type="entry name" value="Poly A polymerase C-terminal region-like"/>
    <property type="match status" value="1"/>
</dbReference>
<dbReference type="PROSITE" id="PS51831">
    <property type="entry name" value="HD"/>
    <property type="match status" value="1"/>
</dbReference>
<feature type="chain" id="PRO_1000085812" description="Multifunctional CCA protein">
    <location>
        <begin position="1"/>
        <end position="417"/>
    </location>
</feature>
<feature type="domain" description="HD" evidence="1">
    <location>
        <begin position="225"/>
        <end position="326"/>
    </location>
</feature>
<feature type="binding site" evidence="1">
    <location>
        <position position="8"/>
    </location>
    <ligand>
        <name>ATP</name>
        <dbReference type="ChEBI" id="CHEBI:30616"/>
    </ligand>
</feature>
<feature type="binding site" evidence="1">
    <location>
        <position position="8"/>
    </location>
    <ligand>
        <name>CTP</name>
        <dbReference type="ChEBI" id="CHEBI:37563"/>
    </ligand>
</feature>
<feature type="binding site" evidence="1">
    <location>
        <position position="11"/>
    </location>
    <ligand>
        <name>ATP</name>
        <dbReference type="ChEBI" id="CHEBI:30616"/>
    </ligand>
</feature>
<feature type="binding site" evidence="1">
    <location>
        <position position="11"/>
    </location>
    <ligand>
        <name>CTP</name>
        <dbReference type="ChEBI" id="CHEBI:37563"/>
    </ligand>
</feature>
<feature type="binding site" evidence="1">
    <location>
        <position position="21"/>
    </location>
    <ligand>
        <name>Mg(2+)</name>
        <dbReference type="ChEBI" id="CHEBI:18420"/>
    </ligand>
</feature>
<feature type="binding site" evidence="1">
    <location>
        <position position="23"/>
    </location>
    <ligand>
        <name>Mg(2+)</name>
        <dbReference type="ChEBI" id="CHEBI:18420"/>
    </ligand>
</feature>
<feature type="binding site" evidence="1">
    <location>
        <position position="91"/>
    </location>
    <ligand>
        <name>ATP</name>
        <dbReference type="ChEBI" id="CHEBI:30616"/>
    </ligand>
</feature>
<feature type="binding site" evidence="1">
    <location>
        <position position="91"/>
    </location>
    <ligand>
        <name>CTP</name>
        <dbReference type="ChEBI" id="CHEBI:37563"/>
    </ligand>
</feature>
<feature type="binding site" evidence="1">
    <location>
        <position position="137"/>
    </location>
    <ligand>
        <name>ATP</name>
        <dbReference type="ChEBI" id="CHEBI:30616"/>
    </ligand>
</feature>
<feature type="binding site" evidence="1">
    <location>
        <position position="137"/>
    </location>
    <ligand>
        <name>CTP</name>
        <dbReference type="ChEBI" id="CHEBI:37563"/>
    </ligand>
</feature>
<feature type="binding site" evidence="1">
    <location>
        <position position="140"/>
    </location>
    <ligand>
        <name>ATP</name>
        <dbReference type="ChEBI" id="CHEBI:30616"/>
    </ligand>
</feature>
<feature type="binding site" evidence="1">
    <location>
        <position position="140"/>
    </location>
    <ligand>
        <name>CTP</name>
        <dbReference type="ChEBI" id="CHEBI:37563"/>
    </ligand>
</feature>